<accession>B1MC29</accession>
<gene>
    <name evidence="1" type="primary">cpfC</name>
    <name type="ordered locus">MAB_2721c</name>
</gene>
<comment type="function">
    <text evidence="1">Involved in coproporphyrin-dependent heme b biosynthesis. Catalyzes the insertion of ferrous iron into coproporphyrin III to form Fe-coproporphyrin III.</text>
</comment>
<comment type="catalytic activity">
    <reaction evidence="1">
        <text>Fe-coproporphyrin III + 2 H(+) = coproporphyrin III + Fe(2+)</text>
        <dbReference type="Rhea" id="RHEA:49572"/>
        <dbReference type="ChEBI" id="CHEBI:15378"/>
        <dbReference type="ChEBI" id="CHEBI:29033"/>
        <dbReference type="ChEBI" id="CHEBI:68438"/>
        <dbReference type="ChEBI" id="CHEBI:131725"/>
        <dbReference type="EC" id="4.99.1.9"/>
    </reaction>
    <physiologicalReaction direction="right-to-left" evidence="1">
        <dbReference type="Rhea" id="RHEA:49574"/>
    </physiologicalReaction>
</comment>
<comment type="pathway">
    <text evidence="1">Porphyrin-containing compound metabolism; protoheme biosynthesis.</text>
</comment>
<comment type="subcellular location">
    <subcellularLocation>
        <location evidence="1">Cytoplasm</location>
    </subcellularLocation>
</comment>
<comment type="similarity">
    <text evidence="1">Belongs to the ferrochelatase family.</text>
</comment>
<keyword id="KW-0963">Cytoplasm</keyword>
<keyword id="KW-0350">Heme biosynthesis</keyword>
<keyword id="KW-0408">Iron</keyword>
<keyword id="KW-0456">Lyase</keyword>
<keyword id="KW-0479">Metal-binding</keyword>
<keyword id="KW-0627">Porphyrin biosynthesis</keyword>
<keyword id="KW-1185">Reference proteome</keyword>
<organism>
    <name type="scientific">Mycobacteroides abscessus (strain ATCC 19977 / DSM 44196 / CCUG 20993 / CIP 104536 / JCM 13569 / NCTC 13031 / TMC 1543 / L948)</name>
    <name type="common">Mycobacterium abscessus</name>
    <dbReference type="NCBI Taxonomy" id="561007"/>
    <lineage>
        <taxon>Bacteria</taxon>
        <taxon>Bacillati</taxon>
        <taxon>Actinomycetota</taxon>
        <taxon>Actinomycetes</taxon>
        <taxon>Mycobacteriales</taxon>
        <taxon>Mycobacteriaceae</taxon>
        <taxon>Mycobacteroides</taxon>
        <taxon>Mycobacteroides abscessus</taxon>
    </lineage>
</organism>
<sequence>MLFDAVLLLSFGGPEGPQEVRPFLENVTRGRGIPPERLDEVAEHYFHFGGVSPINGINRALVDQISRQLESAGHPLPVFFGNRNWHPMVEDTVAEMRDKGIRRAAVFTTSAWGGYSGCKQYVEDIARARAAVGDGAPELVKLRQYFDHPSLVQLYAEAVSAAMSSLRGEARLVFTAHSIPLAADRRHGPELYSRQVHYLAQLVAAATGHQDYDVVWQSRSGPPQVPWLEPDIVDHLAALKDRGIRSVAVAPIGFVSDHLEVVWDLDNEAREYAQEHDIELVRAATPGADERFARLAVDLITEVVEGRPALRASGVNPVPGYGFSVNGALCSPLCCGVQED</sequence>
<dbReference type="EC" id="4.99.1.9" evidence="1"/>
<dbReference type="EMBL" id="CU458896">
    <property type="protein sequence ID" value="CAM62800.1"/>
    <property type="molecule type" value="Genomic_DNA"/>
</dbReference>
<dbReference type="RefSeq" id="WP_005082256.1">
    <property type="nucleotide sequence ID" value="NZ_MLCG01000003.1"/>
</dbReference>
<dbReference type="SMR" id="B1MC29"/>
<dbReference type="GeneID" id="93379652"/>
<dbReference type="KEGG" id="mab:MAB_2721c"/>
<dbReference type="UniPathway" id="UPA00252"/>
<dbReference type="Proteomes" id="UP000007137">
    <property type="component" value="Chromosome"/>
</dbReference>
<dbReference type="GO" id="GO:0005737">
    <property type="term" value="C:cytoplasm"/>
    <property type="evidence" value="ECO:0007669"/>
    <property type="project" value="UniProtKB-SubCell"/>
</dbReference>
<dbReference type="GO" id="GO:0004325">
    <property type="term" value="F:ferrochelatase activity"/>
    <property type="evidence" value="ECO:0007669"/>
    <property type="project" value="UniProtKB-UniRule"/>
</dbReference>
<dbReference type="GO" id="GO:0046872">
    <property type="term" value="F:metal ion binding"/>
    <property type="evidence" value="ECO:0007669"/>
    <property type="project" value="UniProtKB-KW"/>
</dbReference>
<dbReference type="GO" id="GO:0006783">
    <property type="term" value="P:heme biosynthetic process"/>
    <property type="evidence" value="ECO:0007669"/>
    <property type="project" value="UniProtKB-UniRule"/>
</dbReference>
<dbReference type="CDD" id="cd00419">
    <property type="entry name" value="Ferrochelatase_C"/>
    <property type="match status" value="1"/>
</dbReference>
<dbReference type="CDD" id="cd03411">
    <property type="entry name" value="Ferrochelatase_N"/>
    <property type="match status" value="1"/>
</dbReference>
<dbReference type="Gene3D" id="3.40.50.1400">
    <property type="match status" value="2"/>
</dbReference>
<dbReference type="HAMAP" id="MF_00323">
    <property type="entry name" value="Ferrochelatase"/>
    <property type="match status" value="1"/>
</dbReference>
<dbReference type="InterPro" id="IPR001015">
    <property type="entry name" value="Ferrochelatase"/>
</dbReference>
<dbReference type="InterPro" id="IPR019772">
    <property type="entry name" value="Ferrochelatase_AS"/>
</dbReference>
<dbReference type="InterPro" id="IPR033644">
    <property type="entry name" value="Ferrochelatase_C"/>
</dbReference>
<dbReference type="InterPro" id="IPR033659">
    <property type="entry name" value="Ferrochelatase_N"/>
</dbReference>
<dbReference type="NCBIfam" id="TIGR00109">
    <property type="entry name" value="hemH"/>
    <property type="match status" value="1"/>
</dbReference>
<dbReference type="NCBIfam" id="NF000689">
    <property type="entry name" value="PRK00035.2-1"/>
    <property type="match status" value="1"/>
</dbReference>
<dbReference type="PANTHER" id="PTHR11108">
    <property type="entry name" value="FERROCHELATASE"/>
    <property type="match status" value="1"/>
</dbReference>
<dbReference type="PANTHER" id="PTHR11108:SF1">
    <property type="entry name" value="FERROCHELATASE, MITOCHONDRIAL"/>
    <property type="match status" value="1"/>
</dbReference>
<dbReference type="Pfam" id="PF00762">
    <property type="entry name" value="Ferrochelatase"/>
    <property type="match status" value="1"/>
</dbReference>
<dbReference type="SUPFAM" id="SSF53800">
    <property type="entry name" value="Chelatase"/>
    <property type="match status" value="1"/>
</dbReference>
<dbReference type="PROSITE" id="PS00534">
    <property type="entry name" value="FERROCHELATASE"/>
    <property type="match status" value="1"/>
</dbReference>
<evidence type="ECO:0000255" key="1">
    <source>
        <dbReference type="HAMAP-Rule" id="MF_00323"/>
    </source>
</evidence>
<name>CPFC_MYCA9</name>
<protein>
    <recommendedName>
        <fullName evidence="1">Coproporphyrin III ferrochelatase</fullName>
        <ecNumber evidence="1">4.99.1.9</ecNumber>
    </recommendedName>
</protein>
<reference key="1">
    <citation type="journal article" date="2009" name="PLoS ONE">
        <title>Non mycobacterial virulence genes in the genome of the emerging pathogen Mycobacterium abscessus.</title>
        <authorList>
            <person name="Ripoll F."/>
            <person name="Pasek S."/>
            <person name="Schenowitz C."/>
            <person name="Dossat C."/>
            <person name="Barbe V."/>
            <person name="Rottman M."/>
            <person name="Macheras E."/>
            <person name="Heym B."/>
            <person name="Herrmann J.L."/>
            <person name="Daffe M."/>
            <person name="Brosch R."/>
            <person name="Risler J.L."/>
            <person name="Gaillard J.L."/>
        </authorList>
    </citation>
    <scope>NUCLEOTIDE SEQUENCE [LARGE SCALE GENOMIC DNA]</scope>
    <source>
        <strain>ATCC 19977 / DSM 44196 / CCUG 20993 / CIP 104536 / JCM 13569 / NCTC 13031 / TMC 1543 / L948</strain>
    </source>
</reference>
<feature type="chain" id="PRO_1000116060" description="Coproporphyrin III ferrochelatase">
    <location>
        <begin position="1"/>
        <end position="340"/>
    </location>
</feature>
<feature type="binding site" evidence="1">
    <location>
        <position position="52"/>
    </location>
    <ligand>
        <name>Fe-coproporphyrin III</name>
        <dbReference type="ChEBI" id="CHEBI:68438"/>
    </ligand>
</feature>
<feature type="binding site" evidence="1">
    <location>
        <position position="121"/>
    </location>
    <ligand>
        <name>Fe-coproporphyrin III</name>
        <dbReference type="ChEBI" id="CHEBI:68438"/>
    </ligand>
</feature>
<feature type="binding site" evidence="1">
    <location>
        <position position="177"/>
    </location>
    <ligand>
        <name>Fe(2+)</name>
        <dbReference type="ChEBI" id="CHEBI:29033"/>
    </ligand>
</feature>
<feature type="binding site" evidence="1">
    <location>
        <position position="260"/>
    </location>
    <ligand>
        <name>Fe(2+)</name>
        <dbReference type="ChEBI" id="CHEBI:29033"/>
    </ligand>
</feature>
<proteinExistence type="inferred from homology"/>